<gene>
    <name evidence="1" type="primary">atpA</name>
    <name type="ordered locus">Bd3899</name>
</gene>
<sequence>METQIRADEISRVLKEQINQYNKKIEVSETGSVLSVGDGVARIYGLENAMAGELVEFPGEVFGMVLNLEEGYVGAVLFGEDRHIKEGDVVKRTKKIVSVPVGEALLGRVVDALGNPIDGRGAINTPHSRIVETKAPGIVYRHPVEEPLQTGIKAIDALVPIGRGQRELIIGDRQTGKTTIAVDTIINQKGLNVQCFYVAIGQKQSTVALVVEKLRAAGALEYTTVIAANASDPAPLQYLAAYSGTAMAEYFRDTGRHALIVYDDLTKQAQAYRQLSLLLRRPPGREAYPGDVFYCHSRLLERASKLSADKGGGSLTALPIIETQAGDISAYIPTNVISITDGQIFLESDLFYKGVRPAISVGKSVSRVGGAAQIKAMKQVAGSLKLELAQFRSMEAFAAFASDLDKASQQQLARGRRLIEVLKQPQYSPVKVEEQIIMIFAAGNAFVDQYPETDVKRYEKEMIEFLKNKHSDIIKTISEKKAIADDTKKALLAALEEFKAIFQPSNK</sequence>
<accession>Q6MGM5</accession>
<organism>
    <name type="scientific">Bdellovibrio bacteriovorus (strain ATCC 15356 / DSM 50701 / NCIMB 9529 / HD100)</name>
    <dbReference type="NCBI Taxonomy" id="264462"/>
    <lineage>
        <taxon>Bacteria</taxon>
        <taxon>Pseudomonadati</taxon>
        <taxon>Bdellovibrionota</taxon>
        <taxon>Bdellovibrionia</taxon>
        <taxon>Bdellovibrionales</taxon>
        <taxon>Pseudobdellovibrionaceae</taxon>
        <taxon>Bdellovibrio</taxon>
    </lineage>
</organism>
<dbReference type="EC" id="7.1.2.2" evidence="1"/>
<dbReference type="EMBL" id="BX842656">
    <property type="protein sequence ID" value="CAE81254.1"/>
    <property type="molecule type" value="Genomic_DNA"/>
</dbReference>
<dbReference type="RefSeq" id="WP_011166197.1">
    <property type="nucleotide sequence ID" value="NC_005363.1"/>
</dbReference>
<dbReference type="SMR" id="Q6MGM5"/>
<dbReference type="STRING" id="264462.Bd3899"/>
<dbReference type="GeneID" id="93014665"/>
<dbReference type="KEGG" id="bba:Bd3899"/>
<dbReference type="eggNOG" id="COG0056">
    <property type="taxonomic scope" value="Bacteria"/>
</dbReference>
<dbReference type="HOGENOM" id="CLU_010091_2_1_7"/>
<dbReference type="Proteomes" id="UP000008080">
    <property type="component" value="Chromosome"/>
</dbReference>
<dbReference type="GO" id="GO:0005886">
    <property type="term" value="C:plasma membrane"/>
    <property type="evidence" value="ECO:0007669"/>
    <property type="project" value="UniProtKB-SubCell"/>
</dbReference>
<dbReference type="GO" id="GO:0045259">
    <property type="term" value="C:proton-transporting ATP synthase complex"/>
    <property type="evidence" value="ECO:0007669"/>
    <property type="project" value="UniProtKB-KW"/>
</dbReference>
<dbReference type="GO" id="GO:0043531">
    <property type="term" value="F:ADP binding"/>
    <property type="evidence" value="ECO:0007669"/>
    <property type="project" value="TreeGrafter"/>
</dbReference>
<dbReference type="GO" id="GO:0005524">
    <property type="term" value="F:ATP binding"/>
    <property type="evidence" value="ECO:0007669"/>
    <property type="project" value="UniProtKB-UniRule"/>
</dbReference>
<dbReference type="GO" id="GO:0046933">
    <property type="term" value="F:proton-transporting ATP synthase activity, rotational mechanism"/>
    <property type="evidence" value="ECO:0007669"/>
    <property type="project" value="UniProtKB-UniRule"/>
</dbReference>
<dbReference type="CDD" id="cd18113">
    <property type="entry name" value="ATP-synt_F1_alpha_C"/>
    <property type="match status" value="1"/>
</dbReference>
<dbReference type="CDD" id="cd18116">
    <property type="entry name" value="ATP-synt_F1_alpha_N"/>
    <property type="match status" value="1"/>
</dbReference>
<dbReference type="CDD" id="cd01132">
    <property type="entry name" value="F1-ATPase_alpha_CD"/>
    <property type="match status" value="1"/>
</dbReference>
<dbReference type="FunFam" id="1.20.150.20:FF:000001">
    <property type="entry name" value="ATP synthase subunit alpha"/>
    <property type="match status" value="1"/>
</dbReference>
<dbReference type="FunFam" id="2.40.30.20:FF:000001">
    <property type="entry name" value="ATP synthase subunit alpha"/>
    <property type="match status" value="1"/>
</dbReference>
<dbReference type="FunFam" id="3.40.50.300:FF:000002">
    <property type="entry name" value="ATP synthase subunit alpha"/>
    <property type="match status" value="1"/>
</dbReference>
<dbReference type="Gene3D" id="2.40.30.20">
    <property type="match status" value="1"/>
</dbReference>
<dbReference type="Gene3D" id="1.20.150.20">
    <property type="entry name" value="ATP synthase alpha/beta chain, C-terminal domain"/>
    <property type="match status" value="1"/>
</dbReference>
<dbReference type="Gene3D" id="3.40.50.300">
    <property type="entry name" value="P-loop containing nucleotide triphosphate hydrolases"/>
    <property type="match status" value="1"/>
</dbReference>
<dbReference type="HAMAP" id="MF_01346">
    <property type="entry name" value="ATP_synth_alpha_bact"/>
    <property type="match status" value="1"/>
</dbReference>
<dbReference type="InterPro" id="IPR023366">
    <property type="entry name" value="ATP_synth_asu-like_sf"/>
</dbReference>
<dbReference type="InterPro" id="IPR000793">
    <property type="entry name" value="ATP_synth_asu_C"/>
</dbReference>
<dbReference type="InterPro" id="IPR038376">
    <property type="entry name" value="ATP_synth_asu_C_sf"/>
</dbReference>
<dbReference type="InterPro" id="IPR033732">
    <property type="entry name" value="ATP_synth_F1_a_nt-bd_dom"/>
</dbReference>
<dbReference type="InterPro" id="IPR005294">
    <property type="entry name" value="ATP_synth_F1_asu"/>
</dbReference>
<dbReference type="InterPro" id="IPR004100">
    <property type="entry name" value="ATPase_F1/V1/A1_a/bsu_N"/>
</dbReference>
<dbReference type="InterPro" id="IPR036121">
    <property type="entry name" value="ATPase_F1/V1/A1_a/bsu_N_sf"/>
</dbReference>
<dbReference type="InterPro" id="IPR000194">
    <property type="entry name" value="ATPase_F1/V1/A1_a/bsu_nucl-bd"/>
</dbReference>
<dbReference type="InterPro" id="IPR027417">
    <property type="entry name" value="P-loop_NTPase"/>
</dbReference>
<dbReference type="NCBIfam" id="TIGR00962">
    <property type="entry name" value="atpA"/>
    <property type="match status" value="1"/>
</dbReference>
<dbReference type="NCBIfam" id="NF009884">
    <property type="entry name" value="PRK13343.1"/>
    <property type="match status" value="1"/>
</dbReference>
<dbReference type="PANTHER" id="PTHR48082">
    <property type="entry name" value="ATP SYNTHASE SUBUNIT ALPHA, MITOCHONDRIAL"/>
    <property type="match status" value="1"/>
</dbReference>
<dbReference type="PANTHER" id="PTHR48082:SF2">
    <property type="entry name" value="ATP SYNTHASE SUBUNIT ALPHA, MITOCHONDRIAL"/>
    <property type="match status" value="1"/>
</dbReference>
<dbReference type="Pfam" id="PF00006">
    <property type="entry name" value="ATP-synt_ab"/>
    <property type="match status" value="1"/>
</dbReference>
<dbReference type="Pfam" id="PF00306">
    <property type="entry name" value="ATP-synt_ab_C"/>
    <property type="match status" value="1"/>
</dbReference>
<dbReference type="Pfam" id="PF02874">
    <property type="entry name" value="ATP-synt_ab_N"/>
    <property type="match status" value="1"/>
</dbReference>
<dbReference type="PIRSF" id="PIRSF039088">
    <property type="entry name" value="F_ATPase_subunit_alpha"/>
    <property type="match status" value="1"/>
</dbReference>
<dbReference type="SUPFAM" id="SSF47917">
    <property type="entry name" value="C-terminal domain of alpha and beta subunits of F1 ATP synthase"/>
    <property type="match status" value="1"/>
</dbReference>
<dbReference type="SUPFAM" id="SSF50615">
    <property type="entry name" value="N-terminal domain of alpha and beta subunits of F1 ATP synthase"/>
    <property type="match status" value="1"/>
</dbReference>
<dbReference type="SUPFAM" id="SSF52540">
    <property type="entry name" value="P-loop containing nucleoside triphosphate hydrolases"/>
    <property type="match status" value="1"/>
</dbReference>
<evidence type="ECO:0000255" key="1">
    <source>
        <dbReference type="HAMAP-Rule" id="MF_01346"/>
    </source>
</evidence>
<comment type="function">
    <text evidence="1">Produces ATP from ADP in the presence of a proton gradient across the membrane. The alpha chain is a regulatory subunit.</text>
</comment>
<comment type="catalytic activity">
    <reaction evidence="1">
        <text>ATP + H2O + 4 H(+)(in) = ADP + phosphate + 5 H(+)(out)</text>
        <dbReference type="Rhea" id="RHEA:57720"/>
        <dbReference type="ChEBI" id="CHEBI:15377"/>
        <dbReference type="ChEBI" id="CHEBI:15378"/>
        <dbReference type="ChEBI" id="CHEBI:30616"/>
        <dbReference type="ChEBI" id="CHEBI:43474"/>
        <dbReference type="ChEBI" id="CHEBI:456216"/>
        <dbReference type="EC" id="7.1.2.2"/>
    </reaction>
</comment>
<comment type="subunit">
    <text evidence="1">F-type ATPases have 2 components, CF(1) - the catalytic core - and CF(0) - the membrane proton channel. CF(1) has five subunits: alpha(3), beta(3), gamma(1), delta(1), epsilon(1). CF(0) has three main subunits: a(1), b(2) and c(9-12). The alpha and beta chains form an alternating ring which encloses part of the gamma chain. CF(1) is attached to CF(0) by a central stalk formed by the gamma and epsilon chains, while a peripheral stalk is formed by the delta and b chains.</text>
</comment>
<comment type="subcellular location">
    <subcellularLocation>
        <location evidence="1">Cell inner membrane</location>
        <topology evidence="1">Peripheral membrane protein</topology>
    </subcellularLocation>
</comment>
<comment type="similarity">
    <text evidence="1">Belongs to the ATPase alpha/beta chains family.</text>
</comment>
<proteinExistence type="inferred from homology"/>
<reference key="1">
    <citation type="journal article" date="2004" name="Science">
        <title>A predator unmasked: life cycle of Bdellovibrio bacteriovorus from a genomic perspective.</title>
        <authorList>
            <person name="Rendulic S."/>
            <person name="Jagtap P."/>
            <person name="Rosinus A."/>
            <person name="Eppinger M."/>
            <person name="Baar C."/>
            <person name="Lanz C."/>
            <person name="Keller H."/>
            <person name="Lambert C."/>
            <person name="Evans K.J."/>
            <person name="Goesmann A."/>
            <person name="Meyer F."/>
            <person name="Sockett R.E."/>
            <person name="Schuster S.C."/>
        </authorList>
    </citation>
    <scope>NUCLEOTIDE SEQUENCE [LARGE SCALE GENOMIC DNA]</scope>
    <source>
        <strain>ATCC 15356 / DSM 50701 / NCIMB 9529 / HD100</strain>
    </source>
</reference>
<name>ATPA_BDEBA</name>
<feature type="chain" id="PRO_0000238204" description="ATP synthase subunit alpha">
    <location>
        <begin position="1"/>
        <end position="507"/>
    </location>
</feature>
<feature type="binding site" evidence="1">
    <location>
        <begin position="171"/>
        <end position="178"/>
    </location>
    <ligand>
        <name>ATP</name>
        <dbReference type="ChEBI" id="CHEBI:30616"/>
    </ligand>
</feature>
<feature type="site" description="Required for activity" evidence="1">
    <location>
        <position position="364"/>
    </location>
</feature>
<keyword id="KW-0066">ATP synthesis</keyword>
<keyword id="KW-0067">ATP-binding</keyword>
<keyword id="KW-0997">Cell inner membrane</keyword>
<keyword id="KW-1003">Cell membrane</keyword>
<keyword id="KW-0139">CF(1)</keyword>
<keyword id="KW-0375">Hydrogen ion transport</keyword>
<keyword id="KW-0406">Ion transport</keyword>
<keyword id="KW-0472">Membrane</keyword>
<keyword id="KW-0547">Nucleotide-binding</keyword>
<keyword id="KW-1185">Reference proteome</keyword>
<keyword id="KW-1278">Translocase</keyword>
<keyword id="KW-0813">Transport</keyword>
<protein>
    <recommendedName>
        <fullName evidence="1">ATP synthase subunit alpha</fullName>
        <ecNumber evidence="1">7.1.2.2</ecNumber>
    </recommendedName>
    <alternativeName>
        <fullName evidence="1">ATP synthase F1 sector subunit alpha</fullName>
    </alternativeName>
    <alternativeName>
        <fullName evidence="1">F-ATPase subunit alpha</fullName>
    </alternativeName>
</protein>